<protein>
    <recommendedName>
        <fullName evidence="1">Dihydroorotate dehydrogenase (quinone)</fullName>
        <ecNumber evidence="1">1.3.5.2</ecNumber>
    </recommendedName>
    <alternativeName>
        <fullName evidence="1">DHOdehase</fullName>
        <shortName evidence="1">DHOD</shortName>
        <shortName evidence="1">DHODase</shortName>
    </alternativeName>
    <alternativeName>
        <fullName evidence="1">Dihydroorotate oxidase</fullName>
    </alternativeName>
</protein>
<keyword id="KW-1003">Cell membrane</keyword>
<keyword id="KW-0285">Flavoprotein</keyword>
<keyword id="KW-0288">FMN</keyword>
<keyword id="KW-0472">Membrane</keyword>
<keyword id="KW-0560">Oxidoreductase</keyword>
<keyword id="KW-0665">Pyrimidine biosynthesis</keyword>
<comment type="function">
    <text evidence="1">Catalyzes the conversion of dihydroorotate to orotate with quinone as electron acceptor.</text>
</comment>
<comment type="catalytic activity">
    <reaction evidence="1">
        <text>(S)-dihydroorotate + a quinone = orotate + a quinol</text>
        <dbReference type="Rhea" id="RHEA:30187"/>
        <dbReference type="ChEBI" id="CHEBI:24646"/>
        <dbReference type="ChEBI" id="CHEBI:30839"/>
        <dbReference type="ChEBI" id="CHEBI:30864"/>
        <dbReference type="ChEBI" id="CHEBI:132124"/>
        <dbReference type="EC" id="1.3.5.2"/>
    </reaction>
</comment>
<comment type="cofactor">
    <cofactor evidence="1">
        <name>FMN</name>
        <dbReference type="ChEBI" id="CHEBI:58210"/>
    </cofactor>
    <text evidence="1">Binds 1 FMN per subunit.</text>
</comment>
<comment type="pathway">
    <text evidence="1">Pyrimidine metabolism; UMP biosynthesis via de novo pathway; orotate from (S)-dihydroorotate (quinone route): step 1/1.</text>
</comment>
<comment type="subunit">
    <text evidence="1">Monomer.</text>
</comment>
<comment type="subcellular location">
    <subcellularLocation>
        <location evidence="1">Cell membrane</location>
        <topology evidence="1">Peripheral membrane protein</topology>
    </subcellularLocation>
</comment>
<comment type="similarity">
    <text evidence="1">Belongs to the dihydroorotate dehydrogenase family. Type 2 subfamily.</text>
</comment>
<dbReference type="EC" id="1.3.5.2" evidence="1"/>
<dbReference type="EMBL" id="CP001488">
    <property type="protein sequence ID" value="ACO00136.1"/>
    <property type="molecule type" value="Genomic_DNA"/>
</dbReference>
<dbReference type="RefSeq" id="WP_004682882.1">
    <property type="nucleotide sequence ID" value="NC_012441.1"/>
</dbReference>
<dbReference type="SMR" id="C0RH28"/>
<dbReference type="KEGG" id="bmi:BMEA_A0348"/>
<dbReference type="HOGENOM" id="CLU_013640_2_1_5"/>
<dbReference type="UniPathway" id="UPA00070">
    <property type="reaction ID" value="UER00946"/>
</dbReference>
<dbReference type="PRO" id="PR:C0RH28"/>
<dbReference type="Proteomes" id="UP000001748">
    <property type="component" value="Chromosome I"/>
</dbReference>
<dbReference type="GO" id="GO:0005737">
    <property type="term" value="C:cytoplasm"/>
    <property type="evidence" value="ECO:0007669"/>
    <property type="project" value="InterPro"/>
</dbReference>
<dbReference type="GO" id="GO:0005886">
    <property type="term" value="C:plasma membrane"/>
    <property type="evidence" value="ECO:0007669"/>
    <property type="project" value="UniProtKB-SubCell"/>
</dbReference>
<dbReference type="GO" id="GO:0106430">
    <property type="term" value="F:dihydroorotate dehydrogenase (quinone) activity"/>
    <property type="evidence" value="ECO:0007669"/>
    <property type="project" value="UniProtKB-EC"/>
</dbReference>
<dbReference type="GO" id="GO:0006207">
    <property type="term" value="P:'de novo' pyrimidine nucleobase biosynthetic process"/>
    <property type="evidence" value="ECO:0007669"/>
    <property type="project" value="InterPro"/>
</dbReference>
<dbReference type="GO" id="GO:0044205">
    <property type="term" value="P:'de novo' UMP biosynthetic process"/>
    <property type="evidence" value="ECO:0007669"/>
    <property type="project" value="UniProtKB-UniRule"/>
</dbReference>
<dbReference type="CDD" id="cd04738">
    <property type="entry name" value="DHOD_2_like"/>
    <property type="match status" value="1"/>
</dbReference>
<dbReference type="Gene3D" id="3.20.20.70">
    <property type="entry name" value="Aldolase class I"/>
    <property type="match status" value="1"/>
</dbReference>
<dbReference type="HAMAP" id="MF_00225">
    <property type="entry name" value="DHO_dh_type2"/>
    <property type="match status" value="1"/>
</dbReference>
<dbReference type="InterPro" id="IPR013785">
    <property type="entry name" value="Aldolase_TIM"/>
</dbReference>
<dbReference type="InterPro" id="IPR050074">
    <property type="entry name" value="DHO_dehydrogenase"/>
</dbReference>
<dbReference type="InterPro" id="IPR005719">
    <property type="entry name" value="Dihydroorotate_DH_2"/>
</dbReference>
<dbReference type="InterPro" id="IPR005720">
    <property type="entry name" value="Dihydroorotate_DH_cat"/>
</dbReference>
<dbReference type="InterPro" id="IPR001295">
    <property type="entry name" value="Dihydroorotate_DH_CS"/>
</dbReference>
<dbReference type="NCBIfam" id="NF003645">
    <property type="entry name" value="PRK05286.1-2"/>
    <property type="match status" value="1"/>
</dbReference>
<dbReference type="NCBIfam" id="NF003652">
    <property type="entry name" value="PRK05286.2-5"/>
    <property type="match status" value="1"/>
</dbReference>
<dbReference type="NCBIfam" id="TIGR01036">
    <property type="entry name" value="pyrD_sub2"/>
    <property type="match status" value="1"/>
</dbReference>
<dbReference type="PANTHER" id="PTHR48109:SF4">
    <property type="entry name" value="DIHYDROOROTATE DEHYDROGENASE (QUINONE), MITOCHONDRIAL"/>
    <property type="match status" value="1"/>
</dbReference>
<dbReference type="PANTHER" id="PTHR48109">
    <property type="entry name" value="DIHYDROOROTATE DEHYDROGENASE (QUINONE), MITOCHONDRIAL-RELATED"/>
    <property type="match status" value="1"/>
</dbReference>
<dbReference type="Pfam" id="PF01180">
    <property type="entry name" value="DHO_dh"/>
    <property type="match status" value="1"/>
</dbReference>
<dbReference type="SUPFAM" id="SSF51395">
    <property type="entry name" value="FMN-linked oxidoreductases"/>
    <property type="match status" value="1"/>
</dbReference>
<dbReference type="PROSITE" id="PS00911">
    <property type="entry name" value="DHODEHASE_1"/>
    <property type="match status" value="1"/>
</dbReference>
<dbReference type="PROSITE" id="PS00912">
    <property type="entry name" value="DHODEHASE_2"/>
    <property type="match status" value="1"/>
</dbReference>
<gene>
    <name evidence="1" type="primary">pyrD</name>
    <name type="ordered locus">BMEA_A0348</name>
</gene>
<proteinExistence type="inferred from homology"/>
<organism>
    <name type="scientific">Brucella melitensis biotype 2 (strain ATCC 23457)</name>
    <dbReference type="NCBI Taxonomy" id="546272"/>
    <lineage>
        <taxon>Bacteria</taxon>
        <taxon>Pseudomonadati</taxon>
        <taxon>Pseudomonadota</taxon>
        <taxon>Alphaproteobacteria</taxon>
        <taxon>Hyphomicrobiales</taxon>
        <taxon>Brucellaceae</taxon>
        <taxon>Brucella/Ochrobactrum group</taxon>
        <taxon>Brucella</taxon>
    </lineage>
</organism>
<evidence type="ECO:0000255" key="1">
    <source>
        <dbReference type="HAMAP-Rule" id="MF_00225"/>
    </source>
</evidence>
<accession>C0RH28</accession>
<feature type="chain" id="PRO_1000195063" description="Dihydroorotate dehydrogenase (quinone)">
    <location>
        <begin position="1"/>
        <end position="364"/>
    </location>
</feature>
<feature type="active site" description="Nucleophile" evidence="1">
    <location>
        <position position="173"/>
    </location>
</feature>
<feature type="binding site" evidence="1">
    <location>
        <begin position="61"/>
        <end position="65"/>
    </location>
    <ligand>
        <name>FMN</name>
        <dbReference type="ChEBI" id="CHEBI:58210"/>
    </ligand>
</feature>
<feature type="binding site" evidence="1">
    <location>
        <position position="65"/>
    </location>
    <ligand>
        <name>substrate</name>
    </ligand>
</feature>
<feature type="binding site" evidence="1">
    <location>
        <position position="85"/>
    </location>
    <ligand>
        <name>FMN</name>
        <dbReference type="ChEBI" id="CHEBI:58210"/>
    </ligand>
</feature>
<feature type="binding site" evidence="1">
    <location>
        <begin position="110"/>
        <end position="114"/>
    </location>
    <ligand>
        <name>substrate</name>
    </ligand>
</feature>
<feature type="binding site" evidence="1">
    <location>
        <position position="139"/>
    </location>
    <ligand>
        <name>FMN</name>
        <dbReference type="ChEBI" id="CHEBI:58210"/>
    </ligand>
</feature>
<feature type="binding site" evidence="1">
    <location>
        <position position="170"/>
    </location>
    <ligand>
        <name>FMN</name>
        <dbReference type="ChEBI" id="CHEBI:58210"/>
    </ligand>
</feature>
<feature type="binding site" evidence="1">
    <location>
        <position position="170"/>
    </location>
    <ligand>
        <name>substrate</name>
    </ligand>
</feature>
<feature type="binding site" evidence="1">
    <location>
        <position position="175"/>
    </location>
    <ligand>
        <name>substrate</name>
    </ligand>
</feature>
<feature type="binding site" evidence="1">
    <location>
        <position position="215"/>
    </location>
    <ligand>
        <name>FMN</name>
        <dbReference type="ChEBI" id="CHEBI:58210"/>
    </ligand>
</feature>
<feature type="binding site" evidence="1">
    <location>
        <position position="243"/>
    </location>
    <ligand>
        <name>FMN</name>
        <dbReference type="ChEBI" id="CHEBI:58210"/>
    </ligand>
</feature>
<feature type="binding site" evidence="1">
    <location>
        <begin position="244"/>
        <end position="245"/>
    </location>
    <ligand>
        <name>substrate</name>
    </ligand>
</feature>
<feature type="binding site" evidence="1">
    <location>
        <position position="266"/>
    </location>
    <ligand>
        <name>FMN</name>
        <dbReference type="ChEBI" id="CHEBI:58210"/>
    </ligand>
</feature>
<feature type="binding site" evidence="1">
    <location>
        <position position="295"/>
    </location>
    <ligand>
        <name>FMN</name>
        <dbReference type="ChEBI" id="CHEBI:58210"/>
    </ligand>
</feature>
<feature type="binding site" evidence="1">
    <location>
        <begin position="316"/>
        <end position="317"/>
    </location>
    <ligand>
        <name>FMN</name>
        <dbReference type="ChEBI" id="CHEBI:58210"/>
    </ligand>
</feature>
<sequence length="364" mass="39284">MSGLFETLGRRALFTFDAEQAHGLSITGLKTGIVTCRTPEDPALSVKVAGLKFPNPLGMAAGYDKNAEVPDALLKLGFGFAEVGTLTPRPQSGNPRPRIFRLVDDKAVINRLGFNNEGHEAAFKRLSRRAGKSGIVGVNIGANKDAEDRIADYVAGIRRFYQLARYFTVNISSPNTPGLRNLQAREALHELLSRVLEARDEEGNMCTLKRPVFLKIAPDLTDEELDDIAAEADAQKLDGIIVSNTTLSRSGLKNPENSNETGGLSGAPLFERSTVVLARMRERVGPDMPLIGVGGIDSAETALAKIKAGADLVQLYSGLIYRGPGLPGEILRGLSTAIKYEGVSSIAELRDRDTKEWAARKLIS</sequence>
<name>PYRD_BRUMB</name>
<reference key="1">
    <citation type="submission" date="2009-03" db="EMBL/GenBank/DDBJ databases">
        <title>Brucella melitensis ATCC 23457 whole genome shotgun sequencing project.</title>
        <authorList>
            <person name="Setubal J.C."/>
            <person name="Boyle S."/>
            <person name="Crasta O.R."/>
            <person name="Gillespie J.J."/>
            <person name="Kenyon R.W."/>
            <person name="Lu J."/>
            <person name="Mane S."/>
            <person name="Nagrani S."/>
            <person name="Shallom J.M."/>
            <person name="Shallom S."/>
            <person name="Shukla M."/>
            <person name="Snyder E.E."/>
            <person name="Sobral B.W."/>
            <person name="Wattam A.R."/>
            <person name="Will R."/>
            <person name="Williams K."/>
            <person name="Yoo H."/>
            <person name="Munk C."/>
            <person name="Tapia R."/>
            <person name="Han C."/>
            <person name="Detter J.C."/>
            <person name="Bruce D."/>
            <person name="Brettin T.S."/>
        </authorList>
    </citation>
    <scope>NUCLEOTIDE SEQUENCE [LARGE SCALE GENOMIC DNA]</scope>
    <source>
        <strain>ATCC 23457</strain>
    </source>
</reference>